<gene>
    <name evidence="5" type="primary">gatA</name>
    <name type="ordered locus">b2094</name>
    <name type="ordered locus">JW2078/JW2081</name>
</gene>
<protein>
    <recommendedName>
        <fullName evidence="5">PTS system galactitol-specific EIIA component</fullName>
    </recommendedName>
    <alternativeName>
        <fullName evidence="5">EIIB-Gat</fullName>
    </alternativeName>
    <alternativeName>
        <fullName evidence="5">Galactitol-specific phosphotransferase enzyme IIA component</fullName>
    </alternativeName>
</protein>
<accession>P69828</accession>
<accession>P37187</accession>
<accession>P76413</accession>
<accession>P94757</accession>
<accession>P97243</accession>
<feature type="chain" id="PRO_0000186576" description="PTS system galactitol-specific EIIA component">
    <location>
        <begin position="1"/>
        <end position="150"/>
    </location>
</feature>
<feature type="domain" description="PTS EIIA type-2" evidence="1">
    <location>
        <begin position="1"/>
        <end position="144"/>
    </location>
</feature>
<feature type="active site" description="Tele-phosphohistidine intermediate" evidence="1">
    <location>
        <position position="62"/>
    </location>
</feature>
<feature type="modified residue" description="Phosphohistidine; by HPr" evidence="6">
    <location>
        <position position="62"/>
    </location>
</feature>
<feature type="sequence conflict" description="In Ref. 1; CAA56228." evidence="6" ref="1">
    <original>D</original>
    <variation>E</variation>
    <location>
        <position position="124"/>
    </location>
</feature>
<comment type="function">
    <text evidence="2 4">The phosphoenolpyruvate-dependent sugar phosphotransferase system (PTS), a major carbohydrate active transport system, catalyzes the phosphorylation of incoming sugar substrates concomitant with their translocation across the cell membrane. The enzyme II complex composed of GatA, GatB and GatC is involved in galactitol transport. It can also use D-glucitol.</text>
</comment>
<comment type="subunit">
    <text evidence="3">Forms a complex with one each of subunit of GatA, GatB and 2 subunits of GatC.</text>
</comment>
<comment type="subcellular location">
    <subcellularLocation>
        <location evidence="7">Cytoplasm</location>
    </subcellularLocation>
</comment>
<comment type="induction">
    <text evidence="4">Constitutively expressed.</text>
</comment>
<comment type="domain">
    <text evidence="1">The EIIA domain is phosphorylated by phospho-HPr on a histidyl residue. Then, it transfers the phosphoryl group to the EIIB domain.</text>
</comment>
<comment type="caution">
    <text evidence="6">In strain W3110, the sequence is interrupted by the insertion of an IS5 element between positions 69 and 70.</text>
</comment>
<keyword id="KW-0963">Cytoplasm</keyword>
<keyword id="KW-0298">Galactitol metabolism</keyword>
<keyword id="KW-0418">Kinase</keyword>
<keyword id="KW-0597">Phosphoprotein</keyword>
<keyword id="KW-0598">Phosphotransferase system</keyword>
<keyword id="KW-1185">Reference proteome</keyword>
<keyword id="KW-0762">Sugar transport</keyword>
<keyword id="KW-0808">Transferase</keyword>
<keyword id="KW-0813">Transport</keyword>
<proteinExistence type="evidence at protein level"/>
<sequence length="150" mass="16907">MTNLFVRSGISFVDRSEVLTHIGNEMLAKGVVHDTWPQALIAREAEFPTGIMLEQHAIAIPHCEAIHAKSSAIYLLRPTNKVHFQQADDDNDVAVSLVIALIVENPQQQLKLLRCLFGKLQQPDIVETLITLPETQLKEYFTKYVLDSDE</sequence>
<evidence type="ECO:0000255" key="1">
    <source>
        <dbReference type="PROSITE-ProRule" id="PRU00417"/>
    </source>
</evidence>
<evidence type="ECO:0000269" key="2">
    <source>
    </source>
</evidence>
<evidence type="ECO:0000269" key="3">
    <source>
    </source>
</evidence>
<evidence type="ECO:0000269" key="4">
    <source>
    </source>
</evidence>
<evidence type="ECO:0000303" key="5">
    <source>
    </source>
</evidence>
<evidence type="ECO:0000305" key="6"/>
<evidence type="ECO:0000305" key="7">
    <source>
    </source>
</evidence>
<dbReference type="EMBL" id="X79837">
    <property type="protein sequence ID" value="CAA56228.1"/>
    <property type="molecule type" value="Genomic_DNA"/>
</dbReference>
<dbReference type="EMBL" id="U00096">
    <property type="protein sequence ID" value="AAC75155.1"/>
    <property type="molecule type" value="Genomic_DNA"/>
</dbReference>
<dbReference type="EMBL" id="AP009048">
    <property type="protein sequence ID" value="BAA15964.1"/>
    <property type="status" value="ALT_SEQ"/>
    <property type="molecule type" value="Genomic_DNA"/>
</dbReference>
<dbReference type="EMBL" id="AP009048">
    <property type="protein sequence ID" value="BAA15957.2"/>
    <property type="status" value="ALT_SEQ"/>
    <property type="molecule type" value="Genomic_DNA"/>
</dbReference>
<dbReference type="PIR" id="E64976">
    <property type="entry name" value="E64976"/>
</dbReference>
<dbReference type="PIR" id="S55903">
    <property type="entry name" value="S55903"/>
</dbReference>
<dbReference type="RefSeq" id="NP_416597.1">
    <property type="nucleotide sequence ID" value="NC_000913.3"/>
</dbReference>
<dbReference type="RefSeq" id="WP_000182899.1">
    <property type="nucleotide sequence ID" value="NZ_SSZK01000011.1"/>
</dbReference>
<dbReference type="SMR" id="P69828"/>
<dbReference type="ComplexPortal" id="CPX-5942">
    <property type="entry name" value="Galactitol-specific enzyme II complex"/>
</dbReference>
<dbReference type="DIP" id="DIP-47900N"/>
<dbReference type="FunCoup" id="P69828">
    <property type="interactions" value="228"/>
</dbReference>
<dbReference type="IntAct" id="P69828">
    <property type="interactions" value="3"/>
</dbReference>
<dbReference type="STRING" id="511145.b2094"/>
<dbReference type="TCDB" id="4.A.5.1.1">
    <property type="family name" value="the pts galactitol (gat) family"/>
</dbReference>
<dbReference type="jPOST" id="P69828"/>
<dbReference type="PaxDb" id="511145-b2094"/>
<dbReference type="EnsemblBacteria" id="AAC75155">
    <property type="protein sequence ID" value="AAC75155"/>
    <property type="gene ID" value="b2094"/>
</dbReference>
<dbReference type="GeneID" id="75172215"/>
<dbReference type="GeneID" id="946633"/>
<dbReference type="KEGG" id="ecj:JW2078"/>
<dbReference type="KEGG" id="ecj:JW2081"/>
<dbReference type="KEGG" id="eco:b2094"/>
<dbReference type="KEGG" id="ecoc:C3026_11755"/>
<dbReference type="PATRIC" id="fig|1411691.4.peg.156"/>
<dbReference type="EchoBASE" id="EB2313"/>
<dbReference type="eggNOG" id="COG1762">
    <property type="taxonomic scope" value="Bacteria"/>
</dbReference>
<dbReference type="HOGENOM" id="CLU_2218929_0_0_6"/>
<dbReference type="InParanoid" id="P69828"/>
<dbReference type="OMA" id="FADYHEA"/>
<dbReference type="OrthoDB" id="3192919at2"/>
<dbReference type="PhylomeDB" id="P69828"/>
<dbReference type="BioCyc" id="EcoCyc:GATA-MONOMER"/>
<dbReference type="BioCyc" id="MetaCyc:MONOMER-124140"/>
<dbReference type="BRENDA" id="2.7.1.200">
    <property type="organism ID" value="2026"/>
</dbReference>
<dbReference type="PRO" id="PR:P69828"/>
<dbReference type="Proteomes" id="UP000000625">
    <property type="component" value="Chromosome"/>
</dbReference>
<dbReference type="GO" id="GO:0005829">
    <property type="term" value="C:cytosol"/>
    <property type="evidence" value="ECO:0000314"/>
    <property type="project" value="EcoCyc"/>
</dbReference>
<dbReference type="GO" id="GO:1902495">
    <property type="term" value="C:transmembrane transporter complex"/>
    <property type="evidence" value="ECO:0000303"/>
    <property type="project" value="ComplexPortal"/>
</dbReference>
<dbReference type="GO" id="GO:0016301">
    <property type="term" value="F:kinase activity"/>
    <property type="evidence" value="ECO:0007669"/>
    <property type="project" value="UniProtKB-KW"/>
</dbReference>
<dbReference type="GO" id="GO:0030295">
    <property type="term" value="F:protein kinase activator activity"/>
    <property type="evidence" value="ECO:0000318"/>
    <property type="project" value="GO_Central"/>
</dbReference>
<dbReference type="GO" id="GO:0090584">
    <property type="term" value="F:protein-phosphocysteine-galactitol-phosphotransferase system transporter activity"/>
    <property type="evidence" value="ECO:0000314"/>
    <property type="project" value="EcoCyc"/>
</dbReference>
<dbReference type="GO" id="GO:0019402">
    <property type="term" value="P:galactitol metabolic process"/>
    <property type="evidence" value="ECO:0007669"/>
    <property type="project" value="UniProtKB-KW"/>
</dbReference>
<dbReference type="GO" id="GO:0015796">
    <property type="term" value="P:galactitol transmembrane transport"/>
    <property type="evidence" value="ECO:0000314"/>
    <property type="project" value="EcoCyc"/>
</dbReference>
<dbReference type="GO" id="GO:0009401">
    <property type="term" value="P:phosphoenolpyruvate-dependent sugar phosphotransferase system"/>
    <property type="evidence" value="ECO:0000314"/>
    <property type="project" value="EcoCyc"/>
</dbReference>
<dbReference type="CDD" id="cd00211">
    <property type="entry name" value="PTS_IIA_fru"/>
    <property type="match status" value="1"/>
</dbReference>
<dbReference type="FunFam" id="3.40.930.10:FF:000016">
    <property type="entry name" value="Galactitol-specific enzyme IIA of phosphotransferase system"/>
    <property type="match status" value="1"/>
</dbReference>
<dbReference type="Gene3D" id="3.40.930.10">
    <property type="entry name" value="Mannitol-specific EII, Chain A"/>
    <property type="match status" value="1"/>
</dbReference>
<dbReference type="InterPro" id="IPR016152">
    <property type="entry name" value="PTrfase/Anion_transptr"/>
</dbReference>
<dbReference type="InterPro" id="IPR002178">
    <property type="entry name" value="PTS_EIIA_type-2_dom"/>
</dbReference>
<dbReference type="InterPro" id="IPR051541">
    <property type="entry name" value="PTS_SugarTrans_NitroReg"/>
</dbReference>
<dbReference type="NCBIfam" id="NF007236">
    <property type="entry name" value="PRK09665.1"/>
    <property type="match status" value="1"/>
</dbReference>
<dbReference type="PANTHER" id="PTHR47738">
    <property type="entry name" value="PTS SYSTEM FRUCTOSE-LIKE EIIA COMPONENT-RELATED"/>
    <property type="match status" value="1"/>
</dbReference>
<dbReference type="PANTHER" id="PTHR47738:SF4">
    <property type="entry name" value="PTS SYSTEM GALACTITOL-SPECIFIC EIIA COMPONENT"/>
    <property type="match status" value="1"/>
</dbReference>
<dbReference type="Pfam" id="PF00359">
    <property type="entry name" value="PTS_EIIA_2"/>
    <property type="match status" value="1"/>
</dbReference>
<dbReference type="SUPFAM" id="SSF55804">
    <property type="entry name" value="Phoshotransferase/anion transport protein"/>
    <property type="match status" value="1"/>
</dbReference>
<dbReference type="PROSITE" id="PS51094">
    <property type="entry name" value="PTS_EIIA_TYPE_2"/>
    <property type="match status" value="1"/>
</dbReference>
<reference key="1">
    <citation type="journal article" date="1995" name="Biochim. Biophys. Acta">
        <title>Sequence of the gat operon for galactitol utilization from a wild-type strain EC3132 of Escherichia coli.</title>
        <authorList>
            <person name="Nobelmann B."/>
            <person name="Lengeler J.W."/>
        </authorList>
    </citation>
    <scope>NUCLEOTIDE SEQUENCE [GENOMIC DNA]</scope>
    <source>
        <strain>EC3132</strain>
    </source>
</reference>
<reference key="2">
    <citation type="journal article" date="1997" name="Science">
        <title>The complete genome sequence of Escherichia coli K-12.</title>
        <authorList>
            <person name="Blattner F.R."/>
            <person name="Plunkett G. III"/>
            <person name="Bloch C.A."/>
            <person name="Perna N.T."/>
            <person name="Burland V."/>
            <person name="Riley M."/>
            <person name="Collado-Vides J."/>
            <person name="Glasner J.D."/>
            <person name="Rode C.K."/>
            <person name="Mayhew G.F."/>
            <person name="Gregor J."/>
            <person name="Davis N.W."/>
            <person name="Kirkpatrick H.A."/>
            <person name="Goeden M.A."/>
            <person name="Rose D.J."/>
            <person name="Mau B."/>
            <person name="Shao Y."/>
        </authorList>
    </citation>
    <scope>NUCLEOTIDE SEQUENCE [LARGE SCALE GENOMIC DNA]</scope>
    <source>
        <strain>K12 / MG1655 / ATCC 47076</strain>
    </source>
</reference>
<reference key="3">
    <citation type="journal article" date="2006" name="Mol. Syst. Biol.">
        <title>Highly accurate genome sequences of Escherichia coli K-12 strains MG1655 and W3110.</title>
        <authorList>
            <person name="Hayashi K."/>
            <person name="Morooka N."/>
            <person name="Yamamoto Y."/>
            <person name="Fujita K."/>
            <person name="Isono K."/>
            <person name="Choi S."/>
            <person name="Ohtsubo E."/>
            <person name="Baba T."/>
            <person name="Wanner B.L."/>
            <person name="Mori H."/>
            <person name="Horiuchi T."/>
        </authorList>
    </citation>
    <scope>NUCLEOTIDE SEQUENCE [LARGE SCALE GENOMIC DNA]</scope>
    <source>
        <strain>K12 / W3110 / ATCC 27325 / DSM 5911</strain>
    </source>
</reference>
<reference key="4">
    <citation type="journal article" date="1975" name="J. Bacteriol.">
        <title>Nature and properties of hexitol transport systems in Escherichia coli.</title>
        <authorList>
            <person name="Lengeler J."/>
        </authorList>
    </citation>
    <scope>FUNCTION</scope>
    <scope>CATALYTIC ACTIVITY</scope>
    <scope>SUBSTRATE SPECIFICITY</scope>
</reference>
<reference key="5">
    <citation type="journal article" date="1996" name="J. Bacteriol.">
        <title>Molecular analysis of the gat genes from Escherichia coli and of their roles in galactitol transport and metabolism.</title>
        <authorList>
            <person name="Nobelmann B."/>
            <person name="Lengeler J.W."/>
        </authorList>
    </citation>
    <scope>FUNCTION</scope>
    <scope>SUBCELLULAR LOCATION</scope>
    <scope>INDUCTION</scope>
</reference>
<reference key="6">
    <citation type="journal article" date="2005" name="J. Biol. Chem.">
        <title>Protein complexes of the Escherichia coli cell envelope.</title>
        <authorList>
            <person name="Stenberg F."/>
            <person name="Chovanec P."/>
            <person name="Maslen S.L."/>
            <person name="Robinson C.V."/>
            <person name="Ilag L."/>
            <person name="von Heijne G."/>
            <person name="Daley D.O."/>
        </authorList>
    </citation>
    <scope>SUBUNIT</scope>
    <source>
        <strain>BL21-DE3</strain>
    </source>
</reference>
<name>PTKA_ECOLI</name>
<organism>
    <name type="scientific">Escherichia coli (strain K12)</name>
    <dbReference type="NCBI Taxonomy" id="83333"/>
    <lineage>
        <taxon>Bacteria</taxon>
        <taxon>Pseudomonadati</taxon>
        <taxon>Pseudomonadota</taxon>
        <taxon>Gammaproteobacteria</taxon>
        <taxon>Enterobacterales</taxon>
        <taxon>Enterobacteriaceae</taxon>
        <taxon>Escherichia</taxon>
    </lineage>
</organism>